<accession>A7GG34</accession>
<name>RIMM_CLOBL</name>
<dbReference type="EMBL" id="CP000728">
    <property type="protein sequence ID" value="ABS39498.1"/>
    <property type="molecule type" value="Genomic_DNA"/>
</dbReference>
<dbReference type="RefSeq" id="WP_004451026.1">
    <property type="nucleotide sequence ID" value="NC_009699.1"/>
</dbReference>
<dbReference type="SMR" id="A7GG34"/>
<dbReference type="KEGG" id="cbf:CLI_2502"/>
<dbReference type="HOGENOM" id="CLU_077636_3_2_9"/>
<dbReference type="Proteomes" id="UP000002410">
    <property type="component" value="Chromosome"/>
</dbReference>
<dbReference type="GO" id="GO:0005737">
    <property type="term" value="C:cytoplasm"/>
    <property type="evidence" value="ECO:0007669"/>
    <property type="project" value="UniProtKB-SubCell"/>
</dbReference>
<dbReference type="GO" id="GO:0005840">
    <property type="term" value="C:ribosome"/>
    <property type="evidence" value="ECO:0007669"/>
    <property type="project" value="InterPro"/>
</dbReference>
<dbReference type="GO" id="GO:0043022">
    <property type="term" value="F:ribosome binding"/>
    <property type="evidence" value="ECO:0007669"/>
    <property type="project" value="InterPro"/>
</dbReference>
<dbReference type="GO" id="GO:0042274">
    <property type="term" value="P:ribosomal small subunit biogenesis"/>
    <property type="evidence" value="ECO:0007669"/>
    <property type="project" value="UniProtKB-UniRule"/>
</dbReference>
<dbReference type="GO" id="GO:0006364">
    <property type="term" value="P:rRNA processing"/>
    <property type="evidence" value="ECO:0007669"/>
    <property type="project" value="UniProtKB-UniRule"/>
</dbReference>
<dbReference type="Gene3D" id="2.30.30.240">
    <property type="entry name" value="PRC-barrel domain"/>
    <property type="match status" value="1"/>
</dbReference>
<dbReference type="Gene3D" id="2.40.30.60">
    <property type="entry name" value="RimM"/>
    <property type="match status" value="1"/>
</dbReference>
<dbReference type="HAMAP" id="MF_00014">
    <property type="entry name" value="Ribosome_mat_RimM"/>
    <property type="match status" value="1"/>
</dbReference>
<dbReference type="InterPro" id="IPR011033">
    <property type="entry name" value="PRC_barrel-like_sf"/>
</dbReference>
<dbReference type="InterPro" id="IPR056792">
    <property type="entry name" value="PRC_RimM"/>
</dbReference>
<dbReference type="InterPro" id="IPR011961">
    <property type="entry name" value="RimM"/>
</dbReference>
<dbReference type="InterPro" id="IPR002676">
    <property type="entry name" value="RimM_N"/>
</dbReference>
<dbReference type="InterPro" id="IPR036976">
    <property type="entry name" value="RimM_N_sf"/>
</dbReference>
<dbReference type="InterPro" id="IPR009000">
    <property type="entry name" value="Transl_B-barrel_sf"/>
</dbReference>
<dbReference type="NCBIfam" id="TIGR02273">
    <property type="entry name" value="16S_RimM"/>
    <property type="match status" value="1"/>
</dbReference>
<dbReference type="PANTHER" id="PTHR33692">
    <property type="entry name" value="RIBOSOME MATURATION FACTOR RIMM"/>
    <property type="match status" value="1"/>
</dbReference>
<dbReference type="PANTHER" id="PTHR33692:SF1">
    <property type="entry name" value="RIBOSOME MATURATION FACTOR RIMM"/>
    <property type="match status" value="1"/>
</dbReference>
<dbReference type="Pfam" id="PF24986">
    <property type="entry name" value="PRC_RimM"/>
    <property type="match status" value="1"/>
</dbReference>
<dbReference type="Pfam" id="PF01782">
    <property type="entry name" value="RimM"/>
    <property type="match status" value="1"/>
</dbReference>
<dbReference type="SUPFAM" id="SSF50346">
    <property type="entry name" value="PRC-barrel domain"/>
    <property type="match status" value="1"/>
</dbReference>
<dbReference type="SUPFAM" id="SSF50447">
    <property type="entry name" value="Translation proteins"/>
    <property type="match status" value="1"/>
</dbReference>
<reference key="1">
    <citation type="submission" date="2007-06" db="EMBL/GenBank/DDBJ databases">
        <authorList>
            <person name="Brinkac L.M."/>
            <person name="Daugherty S."/>
            <person name="Dodson R.J."/>
            <person name="Madupu R."/>
            <person name="Brown J.L."/>
            <person name="Bruce D."/>
            <person name="Detter C."/>
            <person name="Munk C."/>
            <person name="Smith L.A."/>
            <person name="Smith T.J."/>
            <person name="White O."/>
            <person name="Brettin T.S."/>
        </authorList>
    </citation>
    <scope>NUCLEOTIDE SEQUENCE [LARGE SCALE GENOMIC DNA]</scope>
    <source>
        <strain>Langeland / NCTC 10281 / Type F</strain>
    </source>
</reference>
<protein>
    <recommendedName>
        <fullName evidence="1">Ribosome maturation factor RimM</fullName>
    </recommendedName>
</protein>
<evidence type="ECO:0000255" key="1">
    <source>
        <dbReference type="HAMAP-Rule" id="MF_00014"/>
    </source>
</evidence>
<sequence>MKEFLAVGEIINTHGIKGEVKVYPLTDDMKRFKKLKEVFIDGEGRKILSCKLQPNNVVLKIEGIDSIEEANKYRKKLLEIKRENSVKLPKGSYFIADLIECRVIDENGREIGQISDVIKTGSNDVYEVKGKSEVLVPAIKDIVTNIDIENKTVTIKPLEIWQCE</sequence>
<proteinExistence type="inferred from homology"/>
<comment type="function">
    <text evidence="1">An accessory protein needed during the final step in the assembly of 30S ribosomal subunit, possibly for assembly of the head region. Essential for efficient processing of 16S rRNA. May be needed both before and after RbfA during the maturation of 16S rRNA. It has affinity for free ribosomal 30S subunits but not for 70S ribosomes.</text>
</comment>
<comment type="subunit">
    <text evidence="1">Binds ribosomal protein uS19.</text>
</comment>
<comment type="subcellular location">
    <subcellularLocation>
        <location evidence="1">Cytoplasm</location>
    </subcellularLocation>
</comment>
<comment type="domain">
    <text evidence="1">The PRC barrel domain binds ribosomal protein uS19.</text>
</comment>
<comment type="similarity">
    <text evidence="1">Belongs to the RimM family.</text>
</comment>
<organism>
    <name type="scientific">Clostridium botulinum (strain Langeland / NCTC 10281 / Type F)</name>
    <dbReference type="NCBI Taxonomy" id="441772"/>
    <lineage>
        <taxon>Bacteria</taxon>
        <taxon>Bacillati</taxon>
        <taxon>Bacillota</taxon>
        <taxon>Clostridia</taxon>
        <taxon>Eubacteriales</taxon>
        <taxon>Clostridiaceae</taxon>
        <taxon>Clostridium</taxon>
    </lineage>
</organism>
<feature type="chain" id="PRO_1000001163" description="Ribosome maturation factor RimM">
    <location>
        <begin position="1"/>
        <end position="164"/>
    </location>
</feature>
<feature type="domain" description="PRC barrel" evidence="1">
    <location>
        <begin position="90"/>
        <end position="161"/>
    </location>
</feature>
<keyword id="KW-0143">Chaperone</keyword>
<keyword id="KW-0963">Cytoplasm</keyword>
<keyword id="KW-0690">Ribosome biogenesis</keyword>
<keyword id="KW-0698">rRNA processing</keyword>
<gene>
    <name evidence="1" type="primary">rimM</name>
    <name type="ordered locus">CLI_2502</name>
</gene>